<feature type="chain" id="PRO_0000391228" description="NADH-quinone oxidoreductase subunit N">
    <location>
        <begin position="1"/>
        <end position="476"/>
    </location>
</feature>
<feature type="transmembrane region" description="Helical" evidence="1">
    <location>
        <begin position="5"/>
        <end position="25"/>
    </location>
</feature>
<feature type="transmembrane region" description="Helical" evidence="1">
    <location>
        <begin position="38"/>
        <end position="58"/>
    </location>
</feature>
<feature type="transmembrane region" description="Helical" evidence="1">
    <location>
        <begin position="70"/>
        <end position="90"/>
    </location>
</feature>
<feature type="transmembrane region" description="Helical" evidence="1">
    <location>
        <begin position="97"/>
        <end position="117"/>
    </location>
</feature>
<feature type="transmembrane region" description="Helical" evidence="1">
    <location>
        <begin position="122"/>
        <end position="142"/>
    </location>
</feature>
<feature type="transmembrane region" description="Helical" evidence="1">
    <location>
        <begin position="157"/>
        <end position="177"/>
    </location>
</feature>
<feature type="transmembrane region" description="Helical" evidence="1">
    <location>
        <begin position="196"/>
        <end position="218"/>
    </location>
</feature>
<feature type="transmembrane region" description="Helical" evidence="1">
    <location>
        <begin position="231"/>
        <end position="253"/>
    </location>
</feature>
<feature type="transmembrane region" description="Helical" evidence="1">
    <location>
        <begin position="264"/>
        <end position="284"/>
    </location>
</feature>
<feature type="transmembrane region" description="Helical" evidence="1">
    <location>
        <begin position="292"/>
        <end position="312"/>
    </location>
</feature>
<feature type="transmembrane region" description="Helical" evidence="1">
    <location>
        <begin position="318"/>
        <end position="338"/>
    </location>
</feature>
<feature type="transmembrane region" description="Helical" evidence="1">
    <location>
        <begin position="364"/>
        <end position="384"/>
    </location>
</feature>
<feature type="transmembrane region" description="Helical" evidence="1">
    <location>
        <begin position="401"/>
        <end position="421"/>
    </location>
</feature>
<feature type="transmembrane region" description="Helical" evidence="1">
    <location>
        <begin position="445"/>
        <end position="465"/>
    </location>
</feature>
<keyword id="KW-0997">Cell inner membrane</keyword>
<keyword id="KW-1003">Cell membrane</keyword>
<keyword id="KW-0472">Membrane</keyword>
<keyword id="KW-0520">NAD</keyword>
<keyword id="KW-0874">Quinone</keyword>
<keyword id="KW-1185">Reference proteome</keyword>
<keyword id="KW-1278">Translocase</keyword>
<keyword id="KW-0812">Transmembrane</keyword>
<keyword id="KW-1133">Transmembrane helix</keyword>
<keyword id="KW-0813">Transport</keyword>
<keyword id="KW-0830">Ubiquinone</keyword>
<organism>
    <name type="scientific">Sphingopyxis alaskensis (strain DSM 13593 / LMG 18877 / RB2256)</name>
    <name type="common">Sphingomonas alaskensis</name>
    <dbReference type="NCBI Taxonomy" id="317655"/>
    <lineage>
        <taxon>Bacteria</taxon>
        <taxon>Pseudomonadati</taxon>
        <taxon>Pseudomonadota</taxon>
        <taxon>Alphaproteobacteria</taxon>
        <taxon>Sphingomonadales</taxon>
        <taxon>Sphingomonadaceae</taxon>
        <taxon>Sphingopyxis</taxon>
    </lineage>
</organism>
<comment type="function">
    <text evidence="1">NDH-1 shuttles electrons from NADH, via FMN and iron-sulfur (Fe-S) centers, to quinones in the respiratory chain. The immediate electron acceptor for the enzyme in this species is believed to be ubiquinone. Couples the redox reaction to proton translocation (for every two electrons transferred, four hydrogen ions are translocated across the cytoplasmic membrane), and thus conserves the redox energy in a proton gradient.</text>
</comment>
<comment type="catalytic activity">
    <reaction evidence="1">
        <text>a quinone + NADH + 5 H(+)(in) = a quinol + NAD(+) + 4 H(+)(out)</text>
        <dbReference type="Rhea" id="RHEA:57888"/>
        <dbReference type="ChEBI" id="CHEBI:15378"/>
        <dbReference type="ChEBI" id="CHEBI:24646"/>
        <dbReference type="ChEBI" id="CHEBI:57540"/>
        <dbReference type="ChEBI" id="CHEBI:57945"/>
        <dbReference type="ChEBI" id="CHEBI:132124"/>
    </reaction>
</comment>
<comment type="subunit">
    <text evidence="1">NDH-1 is composed of 14 different subunits. Subunits NuoA, H, J, K, L, M, N constitute the membrane sector of the complex.</text>
</comment>
<comment type="subcellular location">
    <subcellularLocation>
        <location evidence="1">Cell inner membrane</location>
        <topology evidence="1">Multi-pass membrane protein</topology>
    </subcellularLocation>
</comment>
<comment type="similarity">
    <text evidence="1">Belongs to the complex I subunit 2 family.</text>
</comment>
<sequence length="476" mass="49544">MTADLALIWPELILTIGGLITLMLGTFMGDRQVGTYQLSALLTLAAAAAAAIALFGVETTVFSGTLSVDAFGGFAKLLIYAASFICILVAPRFFTGGMRAEYPTLILFAALGMGIMASSRDLMTLYVGLELNSLAAYVLASFMRSDERSSEAGLKYFVLGALASGMLLYGISLLYGFTGTTDFAGIAAAMGGEPGIGLIFGIVFVLSGLGFKISAVPFHMWTPDVYEGAPTPVTTFFASAPKVAAMALMARIVIDAMGPAVGAWQQIVIFLALASIILGAVGAIGQKNIKRLLAYSSINNVGFMLIGLAAGTQQGVEGVLTYLLVYLVTTLGAFLVVLQLRDEGGNQVESIPALAGLSQRRPGLAAAMSVFLFSLAGIPPLFGFWPKYLVFEAAVNANLVPLAVAGIVASVIGAFYYIAIIKTMYFDDKSDVEVTGGGNAVEGTIVAASALWLLAVGYLFIPALAVASAHAASVLF</sequence>
<protein>
    <recommendedName>
        <fullName evidence="1">NADH-quinone oxidoreductase subunit N</fullName>
        <ecNumber evidence="1">7.1.1.-</ecNumber>
    </recommendedName>
    <alternativeName>
        <fullName evidence="1">NADH dehydrogenase I subunit N</fullName>
    </alternativeName>
    <alternativeName>
        <fullName evidence="1">NDH-1 subunit N</fullName>
    </alternativeName>
</protein>
<dbReference type="EC" id="7.1.1.-" evidence="1"/>
<dbReference type="EMBL" id="CP000356">
    <property type="protein sequence ID" value="ABF53010.1"/>
    <property type="molecule type" value="Genomic_DNA"/>
</dbReference>
<dbReference type="RefSeq" id="WP_011541593.1">
    <property type="nucleotide sequence ID" value="NC_008048.1"/>
</dbReference>
<dbReference type="SMR" id="Q1GTL2"/>
<dbReference type="STRING" id="317655.Sala_1296"/>
<dbReference type="KEGG" id="sal:Sala_1296"/>
<dbReference type="eggNOG" id="COG1007">
    <property type="taxonomic scope" value="Bacteria"/>
</dbReference>
<dbReference type="HOGENOM" id="CLU_007100_1_5_5"/>
<dbReference type="OrthoDB" id="9811718at2"/>
<dbReference type="Proteomes" id="UP000006578">
    <property type="component" value="Chromosome"/>
</dbReference>
<dbReference type="GO" id="GO:0005886">
    <property type="term" value="C:plasma membrane"/>
    <property type="evidence" value="ECO:0007669"/>
    <property type="project" value="UniProtKB-SubCell"/>
</dbReference>
<dbReference type="GO" id="GO:0008137">
    <property type="term" value="F:NADH dehydrogenase (ubiquinone) activity"/>
    <property type="evidence" value="ECO:0007669"/>
    <property type="project" value="InterPro"/>
</dbReference>
<dbReference type="GO" id="GO:0050136">
    <property type="term" value="F:NADH:ubiquinone reductase (non-electrogenic) activity"/>
    <property type="evidence" value="ECO:0007669"/>
    <property type="project" value="UniProtKB-UniRule"/>
</dbReference>
<dbReference type="GO" id="GO:0048038">
    <property type="term" value="F:quinone binding"/>
    <property type="evidence" value="ECO:0007669"/>
    <property type="project" value="UniProtKB-KW"/>
</dbReference>
<dbReference type="GO" id="GO:0042773">
    <property type="term" value="P:ATP synthesis coupled electron transport"/>
    <property type="evidence" value="ECO:0007669"/>
    <property type="project" value="InterPro"/>
</dbReference>
<dbReference type="HAMAP" id="MF_00445">
    <property type="entry name" value="NDH1_NuoN_1"/>
    <property type="match status" value="1"/>
</dbReference>
<dbReference type="InterPro" id="IPR010096">
    <property type="entry name" value="NADH-Q_OxRdtase_suN/2"/>
</dbReference>
<dbReference type="InterPro" id="IPR001750">
    <property type="entry name" value="ND/Mrp_TM"/>
</dbReference>
<dbReference type="NCBIfam" id="TIGR01770">
    <property type="entry name" value="NDH_I_N"/>
    <property type="match status" value="1"/>
</dbReference>
<dbReference type="NCBIfam" id="NF004440">
    <property type="entry name" value="PRK05777.1-3"/>
    <property type="match status" value="1"/>
</dbReference>
<dbReference type="PANTHER" id="PTHR22773">
    <property type="entry name" value="NADH DEHYDROGENASE"/>
    <property type="match status" value="1"/>
</dbReference>
<dbReference type="Pfam" id="PF00361">
    <property type="entry name" value="Proton_antipo_M"/>
    <property type="match status" value="1"/>
</dbReference>
<gene>
    <name evidence="1" type="primary">nuoN</name>
    <name type="ordered locus">Sala_1296</name>
</gene>
<proteinExistence type="inferred from homology"/>
<accession>Q1GTL2</accession>
<name>NUON_SPHAL</name>
<reference key="1">
    <citation type="journal article" date="2009" name="Proc. Natl. Acad. Sci. U.S.A.">
        <title>The genomic basis of trophic strategy in marine bacteria.</title>
        <authorList>
            <person name="Lauro F.M."/>
            <person name="McDougald D."/>
            <person name="Thomas T."/>
            <person name="Williams T.J."/>
            <person name="Egan S."/>
            <person name="Rice S."/>
            <person name="DeMaere M.Z."/>
            <person name="Ting L."/>
            <person name="Ertan H."/>
            <person name="Johnson J."/>
            <person name="Ferriera S."/>
            <person name="Lapidus A."/>
            <person name="Anderson I."/>
            <person name="Kyrpides N."/>
            <person name="Munk A.C."/>
            <person name="Detter C."/>
            <person name="Han C.S."/>
            <person name="Brown M.V."/>
            <person name="Robb F.T."/>
            <person name="Kjelleberg S."/>
            <person name="Cavicchioli R."/>
        </authorList>
    </citation>
    <scope>NUCLEOTIDE SEQUENCE [LARGE SCALE GENOMIC DNA]</scope>
    <source>
        <strain>DSM 13593 / LMG 18877 / RB2256</strain>
    </source>
</reference>
<evidence type="ECO:0000255" key="1">
    <source>
        <dbReference type="HAMAP-Rule" id="MF_00445"/>
    </source>
</evidence>